<keyword id="KW-0963">Cytoplasm</keyword>
<keyword id="KW-1185">Reference proteome</keyword>
<keyword id="KW-0819">tRNA processing</keyword>
<organism>
    <name type="scientific">Haemophilus influenzae (strain ATCC 51907 / DSM 11121 / KW20 / Rd)</name>
    <dbReference type="NCBI Taxonomy" id="71421"/>
    <lineage>
        <taxon>Bacteria</taxon>
        <taxon>Pseudomonadati</taxon>
        <taxon>Pseudomonadota</taxon>
        <taxon>Gammaproteobacteria</taxon>
        <taxon>Pasteurellales</taxon>
        <taxon>Pasteurellaceae</taxon>
        <taxon>Haemophilus</taxon>
    </lineage>
</organism>
<comment type="function">
    <text evidence="1">Required for the formation of a threonylcarbamoyl group on adenosine at position 37 (t(6)A37) in tRNAs that read codons beginning with adenine. Is involved in the transfer of the threonylcarbamoyl moiety of threonylcarbamoyl-AMP (TC-AMP) to the N6 group of A37, together with TsaD and TsaE; this reaction does not require ATP in vitro. TsaB seems to play an indirect role in the t(6)A biosynthesis pathway, possibly in regulating the core enzymatic function of TsaD (By similarity).</text>
</comment>
<comment type="subcellular location">
    <subcellularLocation>
        <location evidence="1">Cytoplasm</location>
    </subcellularLocation>
</comment>
<comment type="similarity">
    <text evidence="2">Belongs to the KAE1 / TsaD family. TsaB subfamily.</text>
</comment>
<evidence type="ECO:0000250" key="1"/>
<evidence type="ECO:0000305" key="2"/>
<dbReference type="EMBL" id="L42023">
    <property type="protein sequence ID" value="AAC22046.1"/>
    <property type="molecule type" value="Genomic_DNA"/>
</dbReference>
<dbReference type="PIR" id="H64006">
    <property type="entry name" value="H64006"/>
</dbReference>
<dbReference type="RefSeq" id="NP_438549.1">
    <property type="nucleotide sequence ID" value="NC_000907.1"/>
</dbReference>
<dbReference type="SMR" id="P43990"/>
<dbReference type="STRING" id="71421.HI_0388"/>
<dbReference type="EnsemblBacteria" id="AAC22046">
    <property type="protein sequence ID" value="AAC22046"/>
    <property type="gene ID" value="HI_0388"/>
</dbReference>
<dbReference type="KEGG" id="hin:HI_0388"/>
<dbReference type="PATRIC" id="fig|71421.8.peg.406"/>
<dbReference type="eggNOG" id="COG1214">
    <property type="taxonomic scope" value="Bacteria"/>
</dbReference>
<dbReference type="HOGENOM" id="CLU_064886_2_0_6"/>
<dbReference type="OrthoDB" id="9809995at2"/>
<dbReference type="PhylomeDB" id="P43990"/>
<dbReference type="BioCyc" id="HINF71421:G1GJ1-403-MONOMER"/>
<dbReference type="Proteomes" id="UP000000579">
    <property type="component" value="Chromosome"/>
</dbReference>
<dbReference type="GO" id="GO:0005829">
    <property type="term" value="C:cytosol"/>
    <property type="evidence" value="ECO:0000318"/>
    <property type="project" value="GO_Central"/>
</dbReference>
<dbReference type="GO" id="GO:0002949">
    <property type="term" value="P:tRNA threonylcarbamoyladenosine modification"/>
    <property type="evidence" value="ECO:0007669"/>
    <property type="project" value="InterPro"/>
</dbReference>
<dbReference type="CDD" id="cd24032">
    <property type="entry name" value="ASKHA_NBD_TsaB"/>
    <property type="match status" value="1"/>
</dbReference>
<dbReference type="FunFam" id="3.30.420.40:FF:000097">
    <property type="entry name" value="tRNA threonylcarbamoyladenosine biosynthesis protein TsaB"/>
    <property type="match status" value="1"/>
</dbReference>
<dbReference type="Gene3D" id="3.30.420.40">
    <property type="match status" value="2"/>
</dbReference>
<dbReference type="InterPro" id="IPR043129">
    <property type="entry name" value="ATPase_NBD"/>
</dbReference>
<dbReference type="InterPro" id="IPR000905">
    <property type="entry name" value="Gcp-like_dom"/>
</dbReference>
<dbReference type="InterPro" id="IPR022496">
    <property type="entry name" value="T6A_TsaB"/>
</dbReference>
<dbReference type="NCBIfam" id="TIGR03725">
    <property type="entry name" value="T6A_YeaZ"/>
    <property type="match status" value="1"/>
</dbReference>
<dbReference type="PANTHER" id="PTHR11735">
    <property type="entry name" value="TRNA N6-ADENOSINE THREONYLCARBAMOYLTRANSFERASE"/>
    <property type="match status" value="1"/>
</dbReference>
<dbReference type="PANTHER" id="PTHR11735:SF11">
    <property type="entry name" value="TRNA THREONYLCARBAMOYLADENOSINE BIOSYNTHESIS PROTEIN TSAB"/>
    <property type="match status" value="1"/>
</dbReference>
<dbReference type="Pfam" id="PF00814">
    <property type="entry name" value="TsaD"/>
    <property type="match status" value="1"/>
</dbReference>
<dbReference type="SUPFAM" id="SSF53067">
    <property type="entry name" value="Actin-like ATPase domain"/>
    <property type="match status" value="2"/>
</dbReference>
<name>TSAB_HAEIN</name>
<feature type="chain" id="PRO_0000096991" description="tRNA threonylcarbamoyladenosine biosynthesis protein TsaB">
    <location>
        <begin position="1"/>
        <end position="236"/>
    </location>
</feature>
<gene>
    <name type="primary">tsaB</name>
    <name type="ordered locus">HI_0388</name>
</gene>
<proteinExistence type="evidence at protein level"/>
<sequence>MQNLTLLALDTSTEACSVALLYRGEKTHINELAQRTHTKRILPMIDEILANSGLGLNQVDALAFGRGPGSFTGVRVGAGIAQGLAFGADLPVIPISNLTAMAQAAFELHQAENVVAAIDARMNEVYFSQVVREKVRSDFGEFFQWREIISEQVCSPEQAINQLQNDNAFRVGTGWAAYSQFTEKNLTGSDIALPNALYMLELAQVEYLQKHTISALEIEPIYLRNEVTWKKLPGRE</sequence>
<reference key="1">
    <citation type="journal article" date="1995" name="Science">
        <title>Whole-genome random sequencing and assembly of Haemophilus influenzae Rd.</title>
        <authorList>
            <person name="Fleischmann R.D."/>
            <person name="Adams M.D."/>
            <person name="White O."/>
            <person name="Clayton R.A."/>
            <person name="Kirkness E.F."/>
            <person name="Kerlavage A.R."/>
            <person name="Bult C.J."/>
            <person name="Tomb J.-F."/>
            <person name="Dougherty B.A."/>
            <person name="Merrick J.M."/>
            <person name="McKenney K."/>
            <person name="Sutton G.G."/>
            <person name="FitzHugh W."/>
            <person name="Fields C.A."/>
            <person name="Gocayne J.D."/>
            <person name="Scott J.D."/>
            <person name="Shirley R."/>
            <person name="Liu L.-I."/>
            <person name="Glodek A."/>
            <person name="Kelley J.M."/>
            <person name="Weidman J.F."/>
            <person name="Phillips C.A."/>
            <person name="Spriggs T."/>
            <person name="Hedblom E."/>
            <person name="Cotton M.D."/>
            <person name="Utterback T.R."/>
            <person name="Hanna M.C."/>
            <person name="Nguyen D.T."/>
            <person name="Saudek D.M."/>
            <person name="Brandon R.C."/>
            <person name="Fine L.D."/>
            <person name="Fritchman J.L."/>
            <person name="Fuhrmann J.L."/>
            <person name="Geoghagen N.S.M."/>
            <person name="Gnehm C.L."/>
            <person name="McDonald L.A."/>
            <person name="Small K.V."/>
            <person name="Fraser C.M."/>
            <person name="Smith H.O."/>
            <person name="Venter J.C."/>
        </authorList>
    </citation>
    <scope>NUCLEOTIDE SEQUENCE [LARGE SCALE GENOMIC DNA]</scope>
    <source>
        <strain>ATCC 51907 / DSM 11121 / KW20 / Rd</strain>
    </source>
</reference>
<reference key="2">
    <citation type="journal article" date="2000" name="Electrophoresis">
        <title>Two-dimensional map of the proteome of Haemophilus influenzae.</title>
        <authorList>
            <person name="Langen H."/>
            <person name="Takacs B."/>
            <person name="Evers S."/>
            <person name="Berndt P."/>
            <person name="Lahm H.W."/>
            <person name="Wipf B."/>
            <person name="Gray C."/>
            <person name="Fountoulakis M."/>
        </authorList>
    </citation>
    <scope>IDENTIFICATION BY MASS SPECTROMETRY</scope>
    <source>
        <strain>ATCC 51907 / DSM 11121 / KW20 / Rd</strain>
    </source>
</reference>
<accession>P43990</accession>
<protein>
    <recommendedName>
        <fullName>tRNA threonylcarbamoyladenosine biosynthesis protein TsaB</fullName>
    </recommendedName>
    <alternativeName>
        <fullName>t(6)A37 threonylcarbamoyladenosine biosynthesis protein TsaB</fullName>
    </alternativeName>
</protein>